<proteinExistence type="inferred from homology"/>
<dbReference type="EC" id="3.2.2.27" evidence="1"/>
<dbReference type="EMBL" id="CP001283">
    <property type="protein sequence ID" value="ACK92051.1"/>
    <property type="molecule type" value="Genomic_DNA"/>
</dbReference>
<dbReference type="RefSeq" id="WP_000683471.1">
    <property type="nucleotide sequence ID" value="NC_011773.1"/>
</dbReference>
<dbReference type="SMR" id="B7JHM3"/>
<dbReference type="KEGG" id="bcu:BCAH820_5493"/>
<dbReference type="HOGENOM" id="CLU_032162_3_0_9"/>
<dbReference type="Proteomes" id="UP000001363">
    <property type="component" value="Chromosome"/>
</dbReference>
<dbReference type="GO" id="GO:0005737">
    <property type="term" value="C:cytoplasm"/>
    <property type="evidence" value="ECO:0007669"/>
    <property type="project" value="UniProtKB-SubCell"/>
</dbReference>
<dbReference type="GO" id="GO:0004844">
    <property type="term" value="F:uracil DNA N-glycosylase activity"/>
    <property type="evidence" value="ECO:0007669"/>
    <property type="project" value="UniProtKB-UniRule"/>
</dbReference>
<dbReference type="GO" id="GO:0097510">
    <property type="term" value="P:base-excision repair, AP site formation via deaminated base removal"/>
    <property type="evidence" value="ECO:0007669"/>
    <property type="project" value="TreeGrafter"/>
</dbReference>
<dbReference type="CDD" id="cd10027">
    <property type="entry name" value="UDG-F1-like"/>
    <property type="match status" value="1"/>
</dbReference>
<dbReference type="FunFam" id="3.40.470.10:FF:000001">
    <property type="entry name" value="Uracil-DNA glycosylase"/>
    <property type="match status" value="1"/>
</dbReference>
<dbReference type="Gene3D" id="3.40.470.10">
    <property type="entry name" value="Uracil-DNA glycosylase-like domain"/>
    <property type="match status" value="1"/>
</dbReference>
<dbReference type="HAMAP" id="MF_00148">
    <property type="entry name" value="UDG"/>
    <property type="match status" value="1"/>
</dbReference>
<dbReference type="InterPro" id="IPR002043">
    <property type="entry name" value="UDG_fam1"/>
</dbReference>
<dbReference type="InterPro" id="IPR018085">
    <property type="entry name" value="Ura-DNA_Glyclase_AS"/>
</dbReference>
<dbReference type="InterPro" id="IPR005122">
    <property type="entry name" value="Uracil-DNA_glycosylase-like"/>
</dbReference>
<dbReference type="InterPro" id="IPR036895">
    <property type="entry name" value="Uracil-DNA_glycosylase-like_sf"/>
</dbReference>
<dbReference type="NCBIfam" id="NF003588">
    <property type="entry name" value="PRK05254.1-1"/>
    <property type="match status" value="1"/>
</dbReference>
<dbReference type="NCBIfam" id="NF003589">
    <property type="entry name" value="PRK05254.1-2"/>
    <property type="match status" value="1"/>
</dbReference>
<dbReference type="NCBIfam" id="NF003591">
    <property type="entry name" value="PRK05254.1-4"/>
    <property type="match status" value="1"/>
</dbReference>
<dbReference type="NCBIfam" id="NF003592">
    <property type="entry name" value="PRK05254.1-5"/>
    <property type="match status" value="1"/>
</dbReference>
<dbReference type="NCBIfam" id="TIGR00628">
    <property type="entry name" value="ung"/>
    <property type="match status" value="1"/>
</dbReference>
<dbReference type="PANTHER" id="PTHR11264">
    <property type="entry name" value="URACIL-DNA GLYCOSYLASE"/>
    <property type="match status" value="1"/>
</dbReference>
<dbReference type="PANTHER" id="PTHR11264:SF0">
    <property type="entry name" value="URACIL-DNA GLYCOSYLASE"/>
    <property type="match status" value="1"/>
</dbReference>
<dbReference type="Pfam" id="PF03167">
    <property type="entry name" value="UDG"/>
    <property type="match status" value="1"/>
</dbReference>
<dbReference type="SMART" id="SM00986">
    <property type="entry name" value="UDG"/>
    <property type="match status" value="1"/>
</dbReference>
<dbReference type="SMART" id="SM00987">
    <property type="entry name" value="UreE_C"/>
    <property type="match status" value="1"/>
</dbReference>
<dbReference type="SUPFAM" id="SSF52141">
    <property type="entry name" value="Uracil-DNA glycosylase-like"/>
    <property type="match status" value="1"/>
</dbReference>
<dbReference type="PROSITE" id="PS00130">
    <property type="entry name" value="U_DNA_GLYCOSYLASE"/>
    <property type="match status" value="1"/>
</dbReference>
<comment type="function">
    <text evidence="1">Excises uracil residues from the DNA which can arise as a result of misincorporation of dUMP residues by DNA polymerase or due to deamination of cytosine.</text>
</comment>
<comment type="catalytic activity">
    <reaction evidence="1">
        <text>Hydrolyzes single-stranded DNA or mismatched double-stranded DNA and polynucleotides, releasing free uracil.</text>
        <dbReference type="EC" id="3.2.2.27"/>
    </reaction>
</comment>
<comment type="subcellular location">
    <subcellularLocation>
        <location evidence="1">Cytoplasm</location>
    </subcellularLocation>
</comment>
<comment type="similarity">
    <text evidence="1">Belongs to the uracil-DNA glycosylase (UDG) superfamily. UNG family.</text>
</comment>
<reference key="1">
    <citation type="submission" date="2008-10" db="EMBL/GenBank/DDBJ databases">
        <title>Genome sequence of Bacillus cereus AH820.</title>
        <authorList>
            <person name="Dodson R.J."/>
            <person name="Durkin A.S."/>
            <person name="Rosovitz M.J."/>
            <person name="Rasko D.A."/>
            <person name="Hoffmaster A."/>
            <person name="Ravel J."/>
            <person name="Sutton G."/>
        </authorList>
    </citation>
    <scope>NUCLEOTIDE SEQUENCE [LARGE SCALE GENOMIC DNA]</scope>
    <source>
        <strain>AH820</strain>
    </source>
</reference>
<keyword id="KW-0963">Cytoplasm</keyword>
<keyword id="KW-0227">DNA damage</keyword>
<keyword id="KW-0234">DNA repair</keyword>
<keyword id="KW-0378">Hydrolase</keyword>
<accession>B7JHM3</accession>
<protein>
    <recommendedName>
        <fullName evidence="1">Uracil-DNA glycosylase</fullName>
        <shortName evidence="1">UDG</shortName>
        <ecNumber evidence="1">3.2.2.27</ecNumber>
    </recommendedName>
</protein>
<organism>
    <name type="scientific">Bacillus cereus (strain AH820)</name>
    <dbReference type="NCBI Taxonomy" id="405535"/>
    <lineage>
        <taxon>Bacteria</taxon>
        <taxon>Bacillati</taxon>
        <taxon>Bacillota</taxon>
        <taxon>Bacilli</taxon>
        <taxon>Bacillales</taxon>
        <taxon>Bacillaceae</taxon>
        <taxon>Bacillus</taxon>
        <taxon>Bacillus cereus group</taxon>
    </lineage>
</organism>
<sequence length="225" mass="26029">MKHVLKNDWGPLLAPEFEKEYYRELDVFLKEEYSIHVVYPKVEEIFNALEYTSYENTKVVILGQDPYHGPNQAHGLSFSVQPGVKTPPSLLNMYKELRDEYGYDIPNNGYLVKWAEQGVLLLNTVLTVRQGEANSHKGKGWEHFTDRVIELLNEREKPVIFILWGRHAQAKKKLITNSNHHIIESVHPSPLSARRGFFGSKPYSKVNTILANMGEREIDWEIPNL</sequence>
<gene>
    <name evidence="1" type="primary">ung</name>
    <name type="ordered locus">BCAH820_5493</name>
</gene>
<evidence type="ECO:0000255" key="1">
    <source>
        <dbReference type="HAMAP-Rule" id="MF_00148"/>
    </source>
</evidence>
<feature type="chain" id="PRO_1000199766" description="Uracil-DNA glycosylase">
    <location>
        <begin position="1"/>
        <end position="225"/>
    </location>
</feature>
<feature type="active site" description="Proton acceptor" evidence="1">
    <location>
        <position position="65"/>
    </location>
</feature>
<name>UNG_BACC0</name>